<proteinExistence type="evidence at protein level"/>
<comment type="function">
    <text evidence="3 4 5 6 7">Transcription factor, involved in positive and negative modulation of transcription (PubMed:12835398, PubMed:28614700). Binds to multiple DNA sequence motifs in the regulatory elements of target genes, including homeobox selector egl-5 and LIM homeobox mec-3 (PubMed:12835398). Involved in cell-fate regulation in multiple lineages, including neuronal, mesodermal and vulval (PubMed:10926783, PubMed:12835398, PubMed:28614700, PubMed:8756352). Required to regulate the fate of PLM touch receptor neurons, acting via negative modulation of transcription of egl-5 and mec-3 (PubMed:12835398). May modulate gene expression by interacting with different transcription factors during neuronal and mesodermal cell development (PubMed:8756352). Promotes the proliferative sex myoblast (SM) fate, in a cell autonomous manner, acting via the SoxC transcription factor sem-2 (PubMed:28614700). Involved in vulval cell-fate determination, acting by regulating expression of homeobox protein lin-39, and may link lin-39 to incoming signaling pathways (PubMed:10926783). Plays a role in detoxification of reactive oxygen species (ROS), by regulating expression of transcription factor skn-1 and the phase II detoxification genes (PubMed:32718932).</text>
</comment>
<comment type="subcellular location">
    <subcellularLocation>
        <location evidence="8">Nucleus</location>
    </subcellularLocation>
</comment>
<comment type="developmental stage">
    <text evidence="3 5">Expressed throughout the mesodermal (M) lineage from the 1-M stage to the 18-M stage, and in the sex myoblast (SM) sub-lineage from the 2-SM stage to the 16-SM stage, before the cells differentiate (PubMed:28614700). Expression declines significantly in the differentiated coelomocytes (CC) and vulval muscles, but remains in the differentiated body-wall muscles (BWM) (PubMed:28614700). Expressed in the vulval precursor cells (VPC) during larval development (PubMed:10926783).</text>
</comment>
<comment type="similarity">
    <text evidence="8">Belongs to the sal C2H2-type zinc-finger protein family.</text>
</comment>
<comment type="sequence caution" evidence="8 11">
    <conflict type="erroneous initiation">
        <sequence resource="EMBL-CDS" id="AAB03334"/>
    </conflict>
    <text>Truncated N-terminus.</text>
</comment>
<sequence length="744" mass="81694">MNELLAEMAAVSSRRKQSKPRRMSGEGDAMMSPIDLSTKSFDENNCEKGAGGALPLEDRSNILPHFSVPFANPQQFLSLCAQLGNSSSRNVSSTASTTSSCPIQSCSQSFSSPAALTWHVLDAHEDEQEIFSCDVCTTTFSNGQDIREHKCQKTLASRSTSVPPSTIPSSVCFLSTPTTPCLQFSINESIGTSEIREEDEEEDMDVEDGEHVANQLFGHLLQKSDDKSKMASLFNHAFPPFAAFPNMPPPFLMRQPFDPRADVFAAGRHDNDDDWEALMEISTSDEAEKIRALVGDKAVPTTDPNQCILCRRVLSCKSALQMHYRTHTGERPFKCKICQRAFTTKGNLKTHMGVHRSKHSFRGLPISLPPQLAAMHQHQHQIAPPQRIHIHNPPTSAASAAAAVAQIQASQQCPICQQRFLNAGELAVHITEHRNSLTQPPRVMPTPTTTRVQTFPFVPFFTTPPSLNATDMSTQFNLANILSAQLKNDSSPNTDTSSVEEKITRDDPPKMASLSPSNSSDSSSSVRQDILESSEFEEKLKKLEEPPILEQQVSTTPNPKNENPLLAMQKMWAETEPPPPRQMPVLSKHQCGVCFKHFSSSSALQIHMRTHTGDKPFKCDMCGRAFTTRGNLKVHMGTHSWQQSPSRRGRRIFDVASSVTEKPMLQSPILPTSGAPGASPLAMLGPNGLSGLEMMMMLWRTVCSVCQKVCQSPNELEQHLKEHLNNGSSAAPTPLASAATPPPS</sequence>
<organism evidence="10">
    <name type="scientific">Caenorhabditis elegans</name>
    <dbReference type="NCBI Taxonomy" id="6239"/>
    <lineage>
        <taxon>Eukaryota</taxon>
        <taxon>Metazoa</taxon>
        <taxon>Ecdysozoa</taxon>
        <taxon>Nematoda</taxon>
        <taxon>Chromadorea</taxon>
        <taxon>Rhabditida</taxon>
        <taxon>Rhabditina</taxon>
        <taxon>Rhabditomorpha</taxon>
        <taxon>Rhabditoidea</taxon>
        <taxon>Rhabditidae</taxon>
        <taxon>Peloderinae</taxon>
        <taxon>Caenorhabditis</taxon>
    </lineage>
</organism>
<gene>
    <name evidence="11" type="primary">sem-4</name>
    <name evidence="11" type="ORF">F15C11.1</name>
</gene>
<evidence type="ECO:0000255" key="1">
    <source>
        <dbReference type="PROSITE-ProRule" id="PRU00042"/>
    </source>
</evidence>
<evidence type="ECO:0000256" key="2">
    <source>
        <dbReference type="SAM" id="MobiDB-lite"/>
    </source>
</evidence>
<evidence type="ECO:0000269" key="3">
    <source>
    </source>
</evidence>
<evidence type="ECO:0000269" key="4">
    <source>
    </source>
</evidence>
<evidence type="ECO:0000269" key="5">
    <source>
    </source>
</evidence>
<evidence type="ECO:0000269" key="6">
    <source>
    </source>
</evidence>
<evidence type="ECO:0000269" key="7">
    <source>
    </source>
</evidence>
<evidence type="ECO:0000305" key="8"/>
<evidence type="ECO:0000312" key="9">
    <source>
        <dbReference type="EMBL" id="AAB03333.1"/>
    </source>
</evidence>
<evidence type="ECO:0000312" key="10">
    <source>
        <dbReference type="Proteomes" id="UP000001940"/>
    </source>
</evidence>
<evidence type="ECO:0000312" key="11">
    <source>
        <dbReference type="WormBase" id="F15C11.1"/>
    </source>
</evidence>
<feature type="chain" id="PRO_0000454590" description="Spalt-like protein sem-4">
    <location>
        <begin position="1"/>
        <end position="744"/>
    </location>
</feature>
<feature type="zinc finger region" description="C2H2-type 1" evidence="1">
    <location>
        <begin position="99"/>
        <end position="124"/>
    </location>
</feature>
<feature type="zinc finger region" description="C2H2-type 2" evidence="1">
    <location>
        <begin position="305"/>
        <end position="327"/>
    </location>
</feature>
<feature type="zinc finger region" description="C2H2-type 3" evidence="1">
    <location>
        <begin position="333"/>
        <end position="355"/>
    </location>
</feature>
<feature type="zinc finger region" description="C2H2-type 4" evidence="1">
    <location>
        <begin position="411"/>
        <end position="433"/>
    </location>
</feature>
<feature type="zinc finger region" description="C2H2-type 5" evidence="1">
    <location>
        <begin position="589"/>
        <end position="611"/>
    </location>
</feature>
<feature type="zinc finger region" description="C2H2-type 6" evidence="1">
    <location>
        <begin position="617"/>
        <end position="639"/>
    </location>
</feature>
<feature type="zinc finger region" description="C2H2-type 7" evidence="1">
    <location>
        <begin position="701"/>
        <end position="723"/>
    </location>
</feature>
<feature type="region of interest" description="Disordered" evidence="2">
    <location>
        <begin position="6"/>
        <end position="32"/>
    </location>
</feature>
<feature type="region of interest" description="Disordered" evidence="2">
    <location>
        <begin position="487"/>
        <end position="530"/>
    </location>
</feature>
<feature type="region of interest" description="Disordered" evidence="2">
    <location>
        <begin position="542"/>
        <end position="562"/>
    </location>
</feature>
<feature type="region of interest" description="Disordered" evidence="2">
    <location>
        <begin position="725"/>
        <end position="744"/>
    </location>
</feature>
<feature type="compositionally biased region" description="Basic residues" evidence="2">
    <location>
        <begin position="13"/>
        <end position="22"/>
    </location>
</feature>
<feature type="compositionally biased region" description="Polar residues" evidence="2">
    <location>
        <begin position="487"/>
        <end position="497"/>
    </location>
</feature>
<feature type="compositionally biased region" description="Basic and acidic residues" evidence="2">
    <location>
        <begin position="499"/>
        <end position="509"/>
    </location>
</feature>
<feature type="compositionally biased region" description="Low complexity" evidence="2">
    <location>
        <begin position="513"/>
        <end position="525"/>
    </location>
</feature>
<feature type="compositionally biased region" description="Polar residues" evidence="2">
    <location>
        <begin position="551"/>
        <end position="561"/>
    </location>
</feature>
<feature type="compositionally biased region" description="Low complexity" evidence="2">
    <location>
        <begin position="728"/>
        <end position="744"/>
    </location>
</feature>
<feature type="mutagenesis site" description="In h769; sex myoblasts (SM) are transformed into body-wall muscles (BWM), and coelomocytes transformed into their ventral counterparts, the SM progenitors, which subsequently give rise to two BWMs. Expression of sem-2 is abolished in the M mesoblast-derived lineage." evidence="5">
    <location>
        <begin position="275"/>
        <end position="744"/>
    </location>
</feature>
<feature type="mutagenesis site" description="In n2654; severe pleiotropic abnormalities, including defects in the development of the sex myoblasts, a mesodermal cell type, and of two classes of neurons, the DVB and AVL GABAergic motor neurons. Absence of sex myoblasts in 7% of L3 larvae, defects in differentiation of hermaphrodite-specific neurons (HSN), and M mesoblast-derived coelomocytes (CC) absent in 2% of L3 larvae. Distended intestine in 84% of adults. Vulval precursor cells (VPC), P5.p and P7.p, appear to adopt normal cell fates. Reduced touch-response." evidence="3 4 7">
    <original>H</original>
    <variation>Y</variation>
    <location>
        <position position="323"/>
    </location>
</feature>
<feature type="mutagenesis site" description="In ku200; disrupts function in the vulva and mesoderm. Vulval precursor cells (VPC), P5.p and P7.p, adopt abnormal cell fates. Expression of lin-39 in vulval cells reduced drastically." evidence="3">
    <location>
        <begin position="383"/>
        <end position="744"/>
    </location>
</feature>
<feature type="mutagenesis site" description="In n1378; severe pleiotropic abnormalities, including defects in the development of the sex myoblasts, a mesodermal cell type, and of two classes of neurons, the DVB and AVL GABAergic motor neurons. Absence of sex myoblasts in 98% of L3 larvae, defects in differentiation of hermaphrodite-specific neurons (HSN), and M mesoblast-derived coelomocytes (CC) absent in 30% of L3 larvae. Sex myoblasts (SM) are transformed into body-wall muscles (BWM), and coelomocytes transformed into their ventral counterparts, the SM progenitors, which subsequently give rise to two BWMs. Distended intestine in only 2% of adults. Vulval precursor cells (VPC), P5.p and P7.p, adopt abnormal cell fates. Reduced touch-response. Reduced gst-4 expression." evidence="3 4 5 6 7">
    <location>
        <begin position="569"/>
        <end position="744"/>
    </location>
</feature>
<dbReference type="EMBL" id="U60112">
    <property type="protein sequence ID" value="AAB03333.1"/>
    <property type="molecule type" value="mRNA"/>
</dbReference>
<dbReference type="EMBL" id="U60113">
    <property type="protein sequence ID" value="AAB03334.1"/>
    <property type="status" value="ALT_INIT"/>
    <property type="molecule type" value="mRNA"/>
</dbReference>
<dbReference type="EMBL" id="BX284601">
    <property type="protein sequence ID" value="CAA95798.1"/>
    <property type="molecule type" value="Genomic_DNA"/>
</dbReference>
<dbReference type="PIR" id="T20969">
    <property type="entry name" value="T20969"/>
</dbReference>
<dbReference type="RefSeq" id="NP_491997.1">
    <property type="nucleotide sequence ID" value="NM_059596.5"/>
</dbReference>
<dbReference type="FunCoup" id="G5EFF4">
    <property type="interactions" value="226"/>
</dbReference>
<dbReference type="IntAct" id="G5EFF4">
    <property type="interactions" value="21"/>
</dbReference>
<dbReference type="STRING" id="6239.F15C11.1.1"/>
<dbReference type="PaxDb" id="6239-F15C11.1"/>
<dbReference type="PeptideAtlas" id="G5EFF4"/>
<dbReference type="EnsemblMetazoa" id="F15C11.1.1">
    <property type="protein sequence ID" value="F15C11.1.1"/>
    <property type="gene ID" value="WBGene00004773"/>
</dbReference>
<dbReference type="GeneID" id="172435"/>
<dbReference type="KEGG" id="cel:CELE_F15C11.1"/>
<dbReference type="AGR" id="WB:WBGene00004773"/>
<dbReference type="CTD" id="172435"/>
<dbReference type="WormBase" id="F15C11.1">
    <property type="protein sequence ID" value="CE17673"/>
    <property type="gene ID" value="WBGene00004773"/>
    <property type="gene designation" value="sem-4"/>
</dbReference>
<dbReference type="eggNOG" id="KOG1074">
    <property type="taxonomic scope" value="Eukaryota"/>
</dbReference>
<dbReference type="GeneTree" id="ENSGT00940000167374"/>
<dbReference type="HOGENOM" id="CLU_344259_0_0_1"/>
<dbReference type="InParanoid" id="G5EFF4"/>
<dbReference type="OMA" id="HRSKHSF"/>
<dbReference type="OrthoDB" id="9998363at2759"/>
<dbReference type="PhylomeDB" id="G5EFF4"/>
<dbReference type="PRO" id="PR:G5EFF4"/>
<dbReference type="Proteomes" id="UP000001940">
    <property type="component" value="Chromosome I"/>
</dbReference>
<dbReference type="Bgee" id="WBGene00004773">
    <property type="expression patterns" value="Expressed in pharyngeal muscle cell (C elegans) and 3 other cell types or tissues"/>
</dbReference>
<dbReference type="GO" id="GO:0005634">
    <property type="term" value="C:nucleus"/>
    <property type="evidence" value="ECO:0000314"/>
    <property type="project" value="WormBase"/>
</dbReference>
<dbReference type="GO" id="GO:0000981">
    <property type="term" value="F:DNA-binding transcription factor activity, RNA polymerase II-specific"/>
    <property type="evidence" value="ECO:0000318"/>
    <property type="project" value="GO_Central"/>
</dbReference>
<dbReference type="GO" id="GO:0000977">
    <property type="term" value="F:RNA polymerase II transcription regulatory region sequence-specific DNA binding"/>
    <property type="evidence" value="ECO:0000314"/>
    <property type="project" value="WormBase"/>
</dbReference>
<dbReference type="GO" id="GO:0008270">
    <property type="term" value="F:zinc ion binding"/>
    <property type="evidence" value="ECO:0007669"/>
    <property type="project" value="UniProtKB-KW"/>
</dbReference>
<dbReference type="GO" id="GO:0048333">
    <property type="term" value="P:mesodermal cell differentiation"/>
    <property type="evidence" value="ECO:0000315"/>
    <property type="project" value="UniProtKB"/>
</dbReference>
<dbReference type="GO" id="GO:0042692">
    <property type="term" value="P:muscle cell differentiation"/>
    <property type="evidence" value="ECO:0000315"/>
    <property type="project" value="WormBase"/>
</dbReference>
<dbReference type="GO" id="GO:0048626">
    <property type="term" value="P:myoblast fate specification"/>
    <property type="evidence" value="ECO:0000315"/>
    <property type="project" value="UniProtKB"/>
</dbReference>
<dbReference type="GO" id="GO:0000122">
    <property type="term" value="P:negative regulation of transcription by RNA polymerase II"/>
    <property type="evidence" value="ECO:0000315"/>
    <property type="project" value="WormBase"/>
</dbReference>
<dbReference type="GO" id="GO:0014016">
    <property type="term" value="P:neuroblast differentiation"/>
    <property type="evidence" value="ECO:0000315"/>
    <property type="project" value="UniProtKB"/>
</dbReference>
<dbReference type="GO" id="GO:0010628">
    <property type="term" value="P:positive regulation of gene expression"/>
    <property type="evidence" value="ECO:0000315"/>
    <property type="project" value="UniProtKB"/>
</dbReference>
<dbReference type="GO" id="GO:0045944">
    <property type="term" value="P:positive regulation of transcription by RNA polymerase II"/>
    <property type="evidence" value="ECO:0000315"/>
    <property type="project" value="UniProtKB"/>
</dbReference>
<dbReference type="GO" id="GO:0006357">
    <property type="term" value="P:regulation of transcription by RNA polymerase II"/>
    <property type="evidence" value="ECO:0000315"/>
    <property type="project" value="UniProtKB"/>
</dbReference>
<dbReference type="GO" id="GO:0006979">
    <property type="term" value="P:response to oxidative stress"/>
    <property type="evidence" value="ECO:0000315"/>
    <property type="project" value="UniProtKB"/>
</dbReference>
<dbReference type="GO" id="GO:0060290">
    <property type="term" value="P:transdifferentiation"/>
    <property type="evidence" value="ECO:0000315"/>
    <property type="project" value="WormBase"/>
</dbReference>
<dbReference type="GO" id="GO:0072326">
    <property type="term" value="P:vulval cell fate determination"/>
    <property type="evidence" value="ECO:0000315"/>
    <property type="project" value="UniProtKB"/>
</dbReference>
<dbReference type="FunFam" id="3.30.160.60:FF:002381">
    <property type="entry name" value="Putative spalt protein"/>
    <property type="match status" value="1"/>
</dbReference>
<dbReference type="FunFam" id="3.30.160.60:FF:000025">
    <property type="entry name" value="Spalt-like transcription factor 1"/>
    <property type="match status" value="1"/>
</dbReference>
<dbReference type="FunFam" id="3.30.160.60:FF:000130">
    <property type="entry name" value="Spalt-like transcription factor 4"/>
    <property type="match status" value="1"/>
</dbReference>
<dbReference type="FunFam" id="3.30.160.60:FF:000446">
    <property type="entry name" value="Zinc finger protein"/>
    <property type="match status" value="1"/>
</dbReference>
<dbReference type="Gene3D" id="3.30.160.60">
    <property type="entry name" value="Classic Zinc Finger"/>
    <property type="match status" value="5"/>
</dbReference>
<dbReference type="InterPro" id="IPR051565">
    <property type="entry name" value="Sal_C2H2-zinc-finger"/>
</dbReference>
<dbReference type="InterPro" id="IPR036236">
    <property type="entry name" value="Znf_C2H2_sf"/>
</dbReference>
<dbReference type="InterPro" id="IPR013087">
    <property type="entry name" value="Znf_C2H2_type"/>
</dbReference>
<dbReference type="PANTHER" id="PTHR23233:SF84">
    <property type="entry name" value="FI23031P1"/>
    <property type="match status" value="1"/>
</dbReference>
<dbReference type="PANTHER" id="PTHR23233">
    <property type="entry name" value="SAL-LIKE PROTEIN"/>
    <property type="match status" value="1"/>
</dbReference>
<dbReference type="Pfam" id="PF00096">
    <property type="entry name" value="zf-C2H2"/>
    <property type="match status" value="3"/>
</dbReference>
<dbReference type="Pfam" id="PF12874">
    <property type="entry name" value="zf-met"/>
    <property type="match status" value="1"/>
</dbReference>
<dbReference type="SMART" id="SM00355">
    <property type="entry name" value="ZnF_C2H2"/>
    <property type="match status" value="8"/>
</dbReference>
<dbReference type="SUPFAM" id="SSF57667">
    <property type="entry name" value="beta-beta-alpha zinc fingers"/>
    <property type="match status" value="2"/>
</dbReference>
<dbReference type="PROSITE" id="PS00028">
    <property type="entry name" value="ZINC_FINGER_C2H2_1"/>
    <property type="match status" value="7"/>
</dbReference>
<dbReference type="PROSITE" id="PS50157">
    <property type="entry name" value="ZINC_FINGER_C2H2_2"/>
    <property type="match status" value="5"/>
</dbReference>
<reference evidence="9" key="1">
    <citation type="journal article" date="1996" name="Genes Dev.">
        <title>The Caenorhabditis elegans gene sem-4 controls neuronal and mesodermal cell development and encodes a zinc finger protein.</title>
        <authorList>
            <person name="Basson M."/>
            <person name="Horvitz H.R."/>
        </authorList>
    </citation>
    <scope>NUCLEOTIDE SEQUENCE [GENOMIC DNA]</scope>
    <scope>FUNCTION</scope>
    <scope>MUTAGENESIS OF HIS-323 AND 569-GLN--SER-744</scope>
    <source>
        <strain evidence="9">Bristol N2</strain>
    </source>
</reference>
<reference evidence="10" key="2">
    <citation type="journal article" date="1998" name="Science">
        <title>Genome sequence of the nematode C. elegans: a platform for investigating biology.</title>
        <authorList>
            <consortium name="The C. elegans sequencing consortium"/>
        </authorList>
    </citation>
    <scope>NUCLEOTIDE SEQUENCE [LARGE SCALE GENOMIC DNA]</scope>
    <source>
        <strain evidence="10">Bristol N2</strain>
    </source>
</reference>
<reference evidence="8" key="3">
    <citation type="journal article" date="2000" name="Dev. Biol.">
        <title>sem-4 promotes vulval cell-fate determination in Caenorhabditis elegans through regulation of lin-39 Hox.</title>
        <authorList>
            <person name="Grant K."/>
            <person name="Hanna-Rose W."/>
            <person name="Han M."/>
        </authorList>
    </citation>
    <scope>FUNCTION</scope>
    <scope>DEVELOPMENTAL STAGE</scope>
    <scope>MUTAGENESIS OF HIS-323; 383-ALA--SER-744 AND 569-GLN--SER-744</scope>
</reference>
<reference evidence="8" key="4">
    <citation type="journal article" date="2003" name="Development">
        <title>The Caenorhabditis elegans spalt-like gene sem-4 restricts touch cell fate by repressing the selector Hox gene egl-5 and the effector gene mec-3.</title>
        <authorList>
            <person name="Toker A.S."/>
            <person name="Teng Y."/>
            <person name="Ferreira H.B."/>
            <person name="Emmons S.W."/>
            <person name="Chalfie M."/>
        </authorList>
    </citation>
    <scope>FUNCTION</scope>
    <scope>MUTAGENESIS OF HIS-323 AND 569-GLN--SER-744</scope>
</reference>
<reference evidence="8" key="5">
    <citation type="journal article" date="2017" name="Dev. Biol.">
        <title>The C. elegans Spalt-like protein SEM-4 functions through the SoxC transcription factor SEM-2 to promote a proliferative blast cell fate in the postembryonic mesoderm.</title>
        <authorList>
            <person name="Shen Q."/>
            <person name="Shi H."/>
            <person name="Tian C."/>
            <person name="Ghai V."/>
            <person name="Liu J."/>
        </authorList>
    </citation>
    <scope>FUNCTION</scope>
    <scope>DEVELOPMENTAL STAGE</scope>
    <scope>MUTAGENESIS OF 275-TRP--SER-744 AND 569-GLN--SER-744</scope>
</reference>
<reference evidence="8" key="6">
    <citation type="journal article" date="2020" name="G3 (Bethesda)">
        <title>The SEM-4 Transcription Factor Is Required for Regulation of the Oxidative Stress Response in Caenorhabditis elegans.</title>
        <authorList>
            <person name="Rafikova A."/>
            <person name="Hu Q."/>
            <person name="Kubiseski T.J."/>
        </authorList>
    </citation>
    <scope>FUNCTION</scope>
    <scope>MUTAGENESIS OF 569-GLN--SER-744</scope>
</reference>
<name>SEM4_CAEEL</name>
<keyword id="KW-0479">Metal-binding</keyword>
<keyword id="KW-0539">Nucleus</keyword>
<keyword id="KW-1185">Reference proteome</keyword>
<keyword id="KW-0677">Repeat</keyword>
<keyword id="KW-0804">Transcription</keyword>
<keyword id="KW-0805">Transcription regulation</keyword>
<keyword id="KW-0862">Zinc</keyword>
<keyword id="KW-0863">Zinc-finger</keyword>
<accession>G5EFF4</accession>
<accession>Q7JNU7</accession>
<protein>
    <recommendedName>
        <fullName evidence="8">Spalt-like protein sem-4</fullName>
    </recommendedName>
    <alternativeName>
        <fullName evidence="11">Sex muscle abnormal protein sem-4</fullName>
    </alternativeName>
    <alternativeName>
        <fullName evidence="8">Transcription factor sem-4</fullName>
    </alternativeName>
</protein>